<organism>
    <name type="scientific">Cupriavidus taiwanensis (strain DSM 17343 / BCRC 17206 / CCUG 44338 / CIP 107171 / LMG 19424 / R1)</name>
    <name type="common">Ralstonia taiwanensis (strain LMG 19424)</name>
    <dbReference type="NCBI Taxonomy" id="977880"/>
    <lineage>
        <taxon>Bacteria</taxon>
        <taxon>Pseudomonadati</taxon>
        <taxon>Pseudomonadota</taxon>
        <taxon>Betaproteobacteria</taxon>
        <taxon>Burkholderiales</taxon>
        <taxon>Burkholderiaceae</taxon>
        <taxon>Cupriavidus</taxon>
    </lineage>
</organism>
<reference key="1">
    <citation type="journal article" date="2008" name="Genome Res.">
        <title>Genome sequence of the beta-rhizobium Cupriavidus taiwanensis and comparative genomics of rhizobia.</title>
        <authorList>
            <person name="Amadou C."/>
            <person name="Pascal G."/>
            <person name="Mangenot S."/>
            <person name="Glew M."/>
            <person name="Bontemps C."/>
            <person name="Capela D."/>
            <person name="Carrere S."/>
            <person name="Cruveiller S."/>
            <person name="Dossat C."/>
            <person name="Lajus A."/>
            <person name="Marchetti M."/>
            <person name="Poinsot V."/>
            <person name="Rouy Z."/>
            <person name="Servin B."/>
            <person name="Saad M."/>
            <person name="Schenowitz C."/>
            <person name="Barbe V."/>
            <person name="Batut J."/>
            <person name="Medigue C."/>
            <person name="Masson-Boivin C."/>
        </authorList>
    </citation>
    <scope>NUCLEOTIDE SEQUENCE [LARGE SCALE GENOMIC DNA]</scope>
    <source>
        <strain>DSM 17343 / BCRC 17206 / CCUG 44338 / CIP 107171 / LMG 19424 / R1</strain>
    </source>
</reference>
<comment type="function">
    <text evidence="1">Converts heme B (protoheme IX) to heme O by substitution of the vinyl group on carbon 2 of heme B porphyrin ring with a hydroxyethyl farnesyl side group.</text>
</comment>
<comment type="catalytic activity">
    <reaction evidence="1">
        <text>heme b + (2E,6E)-farnesyl diphosphate + H2O = Fe(II)-heme o + diphosphate</text>
        <dbReference type="Rhea" id="RHEA:28070"/>
        <dbReference type="ChEBI" id="CHEBI:15377"/>
        <dbReference type="ChEBI" id="CHEBI:33019"/>
        <dbReference type="ChEBI" id="CHEBI:60344"/>
        <dbReference type="ChEBI" id="CHEBI:60530"/>
        <dbReference type="ChEBI" id="CHEBI:175763"/>
        <dbReference type="EC" id="2.5.1.141"/>
    </reaction>
</comment>
<comment type="pathway">
    <text evidence="1">Porphyrin-containing compound metabolism; heme O biosynthesis; heme O from protoheme: step 1/1.</text>
</comment>
<comment type="subcellular location">
    <subcellularLocation>
        <location evidence="1">Cell inner membrane</location>
        <topology evidence="1">Multi-pass membrane protein</topology>
    </subcellularLocation>
</comment>
<comment type="miscellaneous">
    <text evidence="1">Carbon 2 of the heme B porphyrin ring is defined according to the Fischer nomenclature.</text>
</comment>
<comment type="similarity">
    <text evidence="1">Belongs to the UbiA prenyltransferase family. Protoheme IX farnesyltransferase subfamily.</text>
</comment>
<comment type="sequence caution" evidence="2">
    <conflict type="erroneous initiation">
        <sequence resource="EMBL-CDS" id="CAP62967"/>
    </conflict>
</comment>
<keyword id="KW-0997">Cell inner membrane</keyword>
<keyword id="KW-1003">Cell membrane</keyword>
<keyword id="KW-0350">Heme biosynthesis</keyword>
<keyword id="KW-0472">Membrane</keyword>
<keyword id="KW-0808">Transferase</keyword>
<keyword id="KW-0812">Transmembrane</keyword>
<keyword id="KW-1133">Transmembrane helix</keyword>
<gene>
    <name evidence="1" type="primary">ctaB</name>
    <name type="ordered locus">RALTA_A0297</name>
</gene>
<sequence>MVTATHPHSLGRLSRMRHLARQYAALTKPRVTQLAVFCAIIGMFLATPGMVPWPVLIGGAAGIWLLAGAAFAINCLVEQKIDALMRRTAWRPSATGEITTRQTLVFSAILGGAGMWLLHVYANDLTMWLTFATFLGYAVVYTILLKPATPQNIVIGGLSGAMPPALGWAAVAGEVPAEAWFLVLIIFTWTPPHFWALALYRRADYAKSGLPMLPVTHGERYTLLHILLYTLIMIAATLLPFVYGMSGYIYLAAALALGAGFLAYAWKLYRNYSDELAQRTFRFSILYLSLLFAALLVDHYFKFVPQV</sequence>
<feature type="chain" id="PRO_0000346037" description="Protoheme IX farnesyltransferase">
    <location>
        <begin position="1"/>
        <end position="307"/>
    </location>
</feature>
<feature type="transmembrane region" description="Helical" evidence="1">
    <location>
        <begin position="31"/>
        <end position="51"/>
    </location>
</feature>
<feature type="transmembrane region" description="Helical" evidence="1">
    <location>
        <begin position="53"/>
        <end position="73"/>
    </location>
</feature>
<feature type="transmembrane region" description="Helical" evidence="1">
    <location>
        <begin position="103"/>
        <end position="123"/>
    </location>
</feature>
<feature type="transmembrane region" description="Helical" evidence="1">
    <location>
        <begin position="125"/>
        <end position="145"/>
    </location>
</feature>
<feature type="transmembrane region" description="Helical" evidence="1">
    <location>
        <begin position="153"/>
        <end position="173"/>
    </location>
</feature>
<feature type="transmembrane region" description="Helical" evidence="1">
    <location>
        <begin position="179"/>
        <end position="199"/>
    </location>
</feature>
<feature type="transmembrane region" description="Helical" evidence="1">
    <location>
        <begin position="223"/>
        <end position="243"/>
    </location>
</feature>
<feature type="transmembrane region" description="Helical" evidence="1">
    <location>
        <begin position="246"/>
        <end position="266"/>
    </location>
</feature>
<feature type="transmembrane region" description="Helical" evidence="1">
    <location>
        <begin position="285"/>
        <end position="305"/>
    </location>
</feature>
<accession>B2AGR8</accession>
<evidence type="ECO:0000255" key="1">
    <source>
        <dbReference type="HAMAP-Rule" id="MF_00154"/>
    </source>
</evidence>
<evidence type="ECO:0000305" key="2"/>
<protein>
    <recommendedName>
        <fullName evidence="1">Protoheme IX farnesyltransferase</fullName>
        <ecNumber evidence="1">2.5.1.141</ecNumber>
    </recommendedName>
    <alternativeName>
        <fullName evidence="1">Heme B farnesyltransferase</fullName>
    </alternativeName>
    <alternativeName>
        <fullName evidence="1">Heme O synthase</fullName>
    </alternativeName>
</protein>
<dbReference type="EC" id="2.5.1.141" evidence="1"/>
<dbReference type="EMBL" id="CU633749">
    <property type="protein sequence ID" value="CAP62967.1"/>
    <property type="status" value="ALT_INIT"/>
    <property type="molecule type" value="Genomic_DNA"/>
</dbReference>
<dbReference type="SMR" id="B2AGR8"/>
<dbReference type="GeneID" id="29762231"/>
<dbReference type="KEGG" id="cti:RALTA_A0297"/>
<dbReference type="eggNOG" id="COG0109">
    <property type="taxonomic scope" value="Bacteria"/>
</dbReference>
<dbReference type="HOGENOM" id="CLU_029631_0_2_4"/>
<dbReference type="UniPathway" id="UPA00834">
    <property type="reaction ID" value="UER00712"/>
</dbReference>
<dbReference type="Proteomes" id="UP000001692">
    <property type="component" value="Chromosome 1"/>
</dbReference>
<dbReference type="GO" id="GO:0005886">
    <property type="term" value="C:plasma membrane"/>
    <property type="evidence" value="ECO:0007669"/>
    <property type="project" value="UniProtKB-SubCell"/>
</dbReference>
<dbReference type="GO" id="GO:0008495">
    <property type="term" value="F:protoheme IX farnesyltransferase activity"/>
    <property type="evidence" value="ECO:0007669"/>
    <property type="project" value="UniProtKB-UniRule"/>
</dbReference>
<dbReference type="GO" id="GO:0048034">
    <property type="term" value="P:heme O biosynthetic process"/>
    <property type="evidence" value="ECO:0007669"/>
    <property type="project" value="UniProtKB-UniRule"/>
</dbReference>
<dbReference type="CDD" id="cd13957">
    <property type="entry name" value="PT_UbiA_Cox10"/>
    <property type="match status" value="1"/>
</dbReference>
<dbReference type="Gene3D" id="1.10.357.140">
    <property type="entry name" value="UbiA prenyltransferase"/>
    <property type="match status" value="1"/>
</dbReference>
<dbReference type="HAMAP" id="MF_00154">
    <property type="entry name" value="CyoE_CtaB"/>
    <property type="match status" value="1"/>
</dbReference>
<dbReference type="InterPro" id="IPR006369">
    <property type="entry name" value="Protohaem_IX_farnesylTrfase"/>
</dbReference>
<dbReference type="InterPro" id="IPR000537">
    <property type="entry name" value="UbiA_prenyltransferase"/>
</dbReference>
<dbReference type="InterPro" id="IPR030470">
    <property type="entry name" value="UbiA_prenylTrfase_CS"/>
</dbReference>
<dbReference type="InterPro" id="IPR044878">
    <property type="entry name" value="UbiA_sf"/>
</dbReference>
<dbReference type="NCBIfam" id="TIGR01473">
    <property type="entry name" value="cyoE_ctaB"/>
    <property type="match status" value="1"/>
</dbReference>
<dbReference type="NCBIfam" id="NF003349">
    <property type="entry name" value="PRK04375.1-2"/>
    <property type="match status" value="1"/>
</dbReference>
<dbReference type="PANTHER" id="PTHR43448:SF7">
    <property type="entry name" value="4-HYDROXYBENZOATE SOLANESYLTRANSFERASE"/>
    <property type="match status" value="1"/>
</dbReference>
<dbReference type="PANTHER" id="PTHR43448">
    <property type="entry name" value="PROTOHEME IX FARNESYLTRANSFERASE, MITOCHONDRIAL"/>
    <property type="match status" value="1"/>
</dbReference>
<dbReference type="Pfam" id="PF01040">
    <property type="entry name" value="UbiA"/>
    <property type="match status" value="1"/>
</dbReference>
<dbReference type="PROSITE" id="PS00943">
    <property type="entry name" value="UBIA"/>
    <property type="match status" value="1"/>
</dbReference>
<proteinExistence type="inferred from homology"/>
<name>COXX_CUPTR</name>